<dbReference type="EC" id="4.2.1.9" evidence="1"/>
<dbReference type="EMBL" id="CP000680">
    <property type="protein sequence ID" value="ABP86952.1"/>
    <property type="molecule type" value="Genomic_DNA"/>
</dbReference>
<dbReference type="SMR" id="A4Y036"/>
<dbReference type="STRING" id="399739.Pmen_4205"/>
<dbReference type="KEGG" id="pmy:Pmen_4205"/>
<dbReference type="PATRIC" id="fig|399739.8.peg.4257"/>
<dbReference type="eggNOG" id="COG0129">
    <property type="taxonomic scope" value="Bacteria"/>
</dbReference>
<dbReference type="HOGENOM" id="CLU_014271_4_3_6"/>
<dbReference type="OrthoDB" id="9807077at2"/>
<dbReference type="UniPathway" id="UPA00047">
    <property type="reaction ID" value="UER00057"/>
</dbReference>
<dbReference type="UniPathway" id="UPA00049">
    <property type="reaction ID" value="UER00061"/>
</dbReference>
<dbReference type="GO" id="GO:0005829">
    <property type="term" value="C:cytosol"/>
    <property type="evidence" value="ECO:0007669"/>
    <property type="project" value="TreeGrafter"/>
</dbReference>
<dbReference type="GO" id="GO:0051537">
    <property type="term" value="F:2 iron, 2 sulfur cluster binding"/>
    <property type="evidence" value="ECO:0007669"/>
    <property type="project" value="UniProtKB-UniRule"/>
</dbReference>
<dbReference type="GO" id="GO:0004160">
    <property type="term" value="F:dihydroxy-acid dehydratase activity"/>
    <property type="evidence" value="ECO:0007669"/>
    <property type="project" value="UniProtKB-UniRule"/>
</dbReference>
<dbReference type="GO" id="GO:0000287">
    <property type="term" value="F:magnesium ion binding"/>
    <property type="evidence" value="ECO:0007669"/>
    <property type="project" value="UniProtKB-UniRule"/>
</dbReference>
<dbReference type="GO" id="GO:0009097">
    <property type="term" value="P:isoleucine biosynthetic process"/>
    <property type="evidence" value="ECO:0007669"/>
    <property type="project" value="UniProtKB-UniRule"/>
</dbReference>
<dbReference type="GO" id="GO:0009099">
    <property type="term" value="P:L-valine biosynthetic process"/>
    <property type="evidence" value="ECO:0007669"/>
    <property type="project" value="UniProtKB-UniRule"/>
</dbReference>
<dbReference type="FunFam" id="3.50.30.80:FF:000001">
    <property type="entry name" value="Dihydroxy-acid dehydratase"/>
    <property type="match status" value="1"/>
</dbReference>
<dbReference type="Gene3D" id="3.50.30.80">
    <property type="entry name" value="IlvD/EDD C-terminal domain-like"/>
    <property type="match status" value="1"/>
</dbReference>
<dbReference type="HAMAP" id="MF_00012">
    <property type="entry name" value="IlvD"/>
    <property type="match status" value="1"/>
</dbReference>
<dbReference type="InterPro" id="IPR042096">
    <property type="entry name" value="Dihydro-acid_dehy_C"/>
</dbReference>
<dbReference type="InterPro" id="IPR004404">
    <property type="entry name" value="DihydroxyA_deHydtase"/>
</dbReference>
<dbReference type="InterPro" id="IPR020558">
    <property type="entry name" value="DiOHA_6PGluconate_deHydtase_CS"/>
</dbReference>
<dbReference type="InterPro" id="IPR056740">
    <property type="entry name" value="ILV_EDD_C"/>
</dbReference>
<dbReference type="InterPro" id="IPR000581">
    <property type="entry name" value="ILV_EDD_N"/>
</dbReference>
<dbReference type="InterPro" id="IPR037237">
    <property type="entry name" value="IlvD/EDD_N"/>
</dbReference>
<dbReference type="NCBIfam" id="TIGR00110">
    <property type="entry name" value="ilvD"/>
    <property type="match status" value="1"/>
</dbReference>
<dbReference type="NCBIfam" id="NF009103">
    <property type="entry name" value="PRK12448.1"/>
    <property type="match status" value="1"/>
</dbReference>
<dbReference type="PANTHER" id="PTHR43661">
    <property type="entry name" value="D-XYLONATE DEHYDRATASE"/>
    <property type="match status" value="1"/>
</dbReference>
<dbReference type="PANTHER" id="PTHR43661:SF3">
    <property type="entry name" value="D-XYLONATE DEHYDRATASE YAGF-RELATED"/>
    <property type="match status" value="1"/>
</dbReference>
<dbReference type="Pfam" id="PF24877">
    <property type="entry name" value="ILV_EDD_C"/>
    <property type="match status" value="1"/>
</dbReference>
<dbReference type="Pfam" id="PF00920">
    <property type="entry name" value="ILVD_EDD_N"/>
    <property type="match status" value="1"/>
</dbReference>
<dbReference type="SUPFAM" id="SSF143975">
    <property type="entry name" value="IlvD/EDD N-terminal domain-like"/>
    <property type="match status" value="1"/>
</dbReference>
<dbReference type="SUPFAM" id="SSF52016">
    <property type="entry name" value="LeuD/IlvD-like"/>
    <property type="match status" value="1"/>
</dbReference>
<dbReference type="PROSITE" id="PS00886">
    <property type="entry name" value="ILVD_EDD_1"/>
    <property type="match status" value="1"/>
</dbReference>
<dbReference type="PROSITE" id="PS00887">
    <property type="entry name" value="ILVD_EDD_2"/>
    <property type="match status" value="1"/>
</dbReference>
<keyword id="KW-0001">2Fe-2S</keyword>
<keyword id="KW-0028">Amino-acid biosynthesis</keyword>
<keyword id="KW-0100">Branched-chain amino acid biosynthesis</keyword>
<keyword id="KW-0408">Iron</keyword>
<keyword id="KW-0411">Iron-sulfur</keyword>
<keyword id="KW-0456">Lyase</keyword>
<keyword id="KW-0460">Magnesium</keyword>
<keyword id="KW-0479">Metal-binding</keyword>
<evidence type="ECO:0000255" key="1">
    <source>
        <dbReference type="HAMAP-Rule" id="MF_00012"/>
    </source>
</evidence>
<gene>
    <name evidence="1" type="primary">ilvD</name>
    <name type="ordered locus">Pmen_4205</name>
</gene>
<feature type="chain" id="PRO_1000001036" description="Dihydroxy-acid dehydratase">
    <location>
        <begin position="1"/>
        <end position="612"/>
    </location>
</feature>
<feature type="active site" description="Proton acceptor" evidence="1">
    <location>
        <position position="515"/>
    </location>
</feature>
<feature type="binding site" evidence="1">
    <location>
        <position position="81"/>
    </location>
    <ligand>
        <name>Mg(2+)</name>
        <dbReference type="ChEBI" id="CHEBI:18420"/>
    </ligand>
</feature>
<feature type="binding site" evidence="1">
    <location>
        <position position="122"/>
    </location>
    <ligand>
        <name>[2Fe-2S] cluster</name>
        <dbReference type="ChEBI" id="CHEBI:190135"/>
    </ligand>
</feature>
<feature type="binding site" evidence="1">
    <location>
        <position position="123"/>
    </location>
    <ligand>
        <name>Mg(2+)</name>
        <dbReference type="ChEBI" id="CHEBI:18420"/>
    </ligand>
</feature>
<feature type="binding site" description="via carbamate group" evidence="1">
    <location>
        <position position="124"/>
    </location>
    <ligand>
        <name>Mg(2+)</name>
        <dbReference type="ChEBI" id="CHEBI:18420"/>
    </ligand>
</feature>
<feature type="binding site" evidence="1">
    <location>
        <position position="193"/>
    </location>
    <ligand>
        <name>[2Fe-2S] cluster</name>
        <dbReference type="ChEBI" id="CHEBI:190135"/>
    </ligand>
</feature>
<feature type="binding site" evidence="1">
    <location>
        <position position="489"/>
    </location>
    <ligand>
        <name>Mg(2+)</name>
        <dbReference type="ChEBI" id="CHEBI:18420"/>
    </ligand>
</feature>
<feature type="modified residue" description="N6-carboxylysine" evidence="1">
    <location>
        <position position="124"/>
    </location>
</feature>
<comment type="function">
    <text evidence="1">Functions in the biosynthesis of branched-chain amino acids. Catalyzes the dehydration of (2R,3R)-2,3-dihydroxy-3-methylpentanoate (2,3-dihydroxy-3-methylvalerate) into 2-oxo-3-methylpentanoate (2-oxo-3-methylvalerate) and of (2R)-2,3-dihydroxy-3-methylbutanoate (2,3-dihydroxyisovalerate) into 2-oxo-3-methylbutanoate (2-oxoisovalerate), the penultimate precursor to L-isoleucine and L-valine, respectively.</text>
</comment>
<comment type="catalytic activity">
    <reaction evidence="1">
        <text>(2R)-2,3-dihydroxy-3-methylbutanoate = 3-methyl-2-oxobutanoate + H2O</text>
        <dbReference type="Rhea" id="RHEA:24809"/>
        <dbReference type="ChEBI" id="CHEBI:11851"/>
        <dbReference type="ChEBI" id="CHEBI:15377"/>
        <dbReference type="ChEBI" id="CHEBI:49072"/>
        <dbReference type="EC" id="4.2.1.9"/>
    </reaction>
    <physiologicalReaction direction="left-to-right" evidence="1">
        <dbReference type="Rhea" id="RHEA:24810"/>
    </physiologicalReaction>
</comment>
<comment type="catalytic activity">
    <reaction evidence="1">
        <text>(2R,3R)-2,3-dihydroxy-3-methylpentanoate = (S)-3-methyl-2-oxopentanoate + H2O</text>
        <dbReference type="Rhea" id="RHEA:27694"/>
        <dbReference type="ChEBI" id="CHEBI:15377"/>
        <dbReference type="ChEBI" id="CHEBI:35146"/>
        <dbReference type="ChEBI" id="CHEBI:49258"/>
        <dbReference type="EC" id="4.2.1.9"/>
    </reaction>
    <physiologicalReaction direction="left-to-right" evidence="1">
        <dbReference type="Rhea" id="RHEA:27695"/>
    </physiologicalReaction>
</comment>
<comment type="cofactor">
    <cofactor evidence="1">
        <name>[2Fe-2S] cluster</name>
        <dbReference type="ChEBI" id="CHEBI:190135"/>
    </cofactor>
    <text evidence="1">Binds 1 [2Fe-2S] cluster per subunit. This cluster acts as a Lewis acid cofactor.</text>
</comment>
<comment type="cofactor">
    <cofactor evidence="1">
        <name>Mg(2+)</name>
        <dbReference type="ChEBI" id="CHEBI:18420"/>
    </cofactor>
</comment>
<comment type="pathway">
    <text evidence="1">Amino-acid biosynthesis; L-isoleucine biosynthesis; L-isoleucine from 2-oxobutanoate: step 3/4.</text>
</comment>
<comment type="pathway">
    <text evidence="1">Amino-acid biosynthesis; L-valine biosynthesis; L-valine from pyruvate: step 3/4.</text>
</comment>
<comment type="subunit">
    <text evidence="1">Homodimer.</text>
</comment>
<comment type="similarity">
    <text evidence="1">Belongs to the IlvD/Edd family.</text>
</comment>
<protein>
    <recommendedName>
        <fullName evidence="1">Dihydroxy-acid dehydratase</fullName>
        <shortName evidence="1">DAD</shortName>
        <ecNumber evidence="1">4.2.1.9</ecNumber>
    </recommendedName>
</protein>
<sequence>MPDYRSKTSTHGRNMAGARALWRATGMKDEDFKKPIIAIANSFTQFVPGHVHLKDLGQLVAREIEKHGGVAKEFNTIAVDDGIAMGHDGMLYSLPSREIIADSVEYMVNAHCADAIVCISNCDKITPGMLMAALRLNIPVVFVSGGPMEAGKTKLANHGLDLVDAMVVAADDSCSDEKVAEYERSACPTCGSCSGMFTANSMNCLTEALGLSLPGNGSTLATHADREQLFLRAGRLVVELCQRYYGEGDESVLPRNVASFKAFENAMTLDIAMGGSTNTILHLLAAAQEAELAFDLRDIDRLSRKVPQLCKVAPNIQKYHMEDVHRAGGIFSILGELARGGLLHTDVPTVHSPSMADAIAQWDITQTRDEKVHTFFKAGPAGIPTQVAFSQSTRWDTLDDDRENGCIRSVEHAYSQEGGLAVLYGNIALDGCVVKTAGVDESIHVFEGTAKIFESQDSAVKGILADEVKAGDIVIIRYEGPKGGPGMQEMLYPTSYLKSKGLGKVCALLTDGRFSGGTSGLSIGHASPEAAAGGAIGLVKDGDKVLIDIPNRSINLLVSDEELAVRRAEQDKKGWKPVQPRARKVSTALKAYALLATSADKGAVRDKAMLDG</sequence>
<organism>
    <name type="scientific">Ectopseudomonas mendocina (strain ymp)</name>
    <name type="common">Pseudomonas mendocina</name>
    <dbReference type="NCBI Taxonomy" id="399739"/>
    <lineage>
        <taxon>Bacteria</taxon>
        <taxon>Pseudomonadati</taxon>
        <taxon>Pseudomonadota</taxon>
        <taxon>Gammaproteobacteria</taxon>
        <taxon>Pseudomonadales</taxon>
        <taxon>Pseudomonadaceae</taxon>
        <taxon>Ectopseudomonas</taxon>
    </lineage>
</organism>
<reference key="1">
    <citation type="submission" date="2007-04" db="EMBL/GenBank/DDBJ databases">
        <title>Complete sequence of Pseudomonas mendocina ymp.</title>
        <authorList>
            <consortium name="US DOE Joint Genome Institute"/>
            <person name="Copeland A."/>
            <person name="Lucas S."/>
            <person name="Lapidus A."/>
            <person name="Barry K."/>
            <person name="Glavina del Rio T."/>
            <person name="Dalin E."/>
            <person name="Tice H."/>
            <person name="Pitluck S."/>
            <person name="Kiss H."/>
            <person name="Brettin T."/>
            <person name="Detter J.C."/>
            <person name="Bruce D."/>
            <person name="Han C."/>
            <person name="Schmutz J."/>
            <person name="Larimer F."/>
            <person name="Land M."/>
            <person name="Hauser L."/>
            <person name="Kyrpides N."/>
            <person name="Mikhailova N."/>
            <person name="Hersman L."/>
            <person name="Dubois J."/>
            <person name="Maurice P."/>
            <person name="Richardson P."/>
        </authorList>
    </citation>
    <scope>NUCLEOTIDE SEQUENCE [LARGE SCALE GENOMIC DNA]</scope>
    <source>
        <strain>ymp</strain>
    </source>
</reference>
<name>ILVD_ECTM1</name>
<accession>A4Y036</accession>
<proteinExistence type="inferred from homology"/>